<comment type="function">
    <text evidence="1">Forms part of the ribosomal stalk which helps the ribosome interact with GTP-bound translation factors. Is thus essential for accurate translation.</text>
</comment>
<comment type="subunit">
    <text evidence="1">Homodimer. Part of the ribosomal stalk of the 50S ribosomal subunit. Forms a multimeric L10(L12)X complex, where L10 forms an elongated spine to which 2 to 4 L12 dimers bind in a sequential fashion. Binds GTP-bound translation factors.</text>
</comment>
<comment type="similarity">
    <text evidence="1">Belongs to the bacterial ribosomal protein bL12 family.</text>
</comment>
<accession>Q0I0U9</accession>
<reference key="1">
    <citation type="journal article" date="2007" name="J. Bacteriol.">
        <title>Complete genome sequence of Haemophilus somnus (Histophilus somni) strain 129Pt and comparison to Haemophilus ducreyi 35000HP and Haemophilus influenzae Rd.</title>
        <authorList>
            <person name="Challacombe J.F."/>
            <person name="Duncan A.J."/>
            <person name="Brettin T.S."/>
            <person name="Bruce D."/>
            <person name="Chertkov O."/>
            <person name="Detter J.C."/>
            <person name="Han C.S."/>
            <person name="Misra M."/>
            <person name="Richardson P."/>
            <person name="Tapia R."/>
            <person name="Thayer N."/>
            <person name="Xie G."/>
            <person name="Inzana T.J."/>
        </authorList>
    </citation>
    <scope>NUCLEOTIDE SEQUENCE [LARGE SCALE GENOMIC DNA]</scope>
    <source>
        <strain>129Pt</strain>
    </source>
</reference>
<organism>
    <name type="scientific">Histophilus somni (strain 129Pt)</name>
    <name type="common">Haemophilus somnus</name>
    <dbReference type="NCBI Taxonomy" id="205914"/>
    <lineage>
        <taxon>Bacteria</taxon>
        <taxon>Pseudomonadati</taxon>
        <taxon>Pseudomonadota</taxon>
        <taxon>Gammaproteobacteria</taxon>
        <taxon>Pasteurellales</taxon>
        <taxon>Pasteurellaceae</taxon>
        <taxon>Histophilus</taxon>
    </lineage>
</organism>
<dbReference type="EMBL" id="CP000436">
    <property type="protein sequence ID" value="ABI24450.1"/>
    <property type="molecule type" value="Genomic_DNA"/>
</dbReference>
<dbReference type="SMR" id="Q0I0U9"/>
<dbReference type="KEGG" id="hso:HS_0172"/>
<dbReference type="eggNOG" id="COG0222">
    <property type="taxonomic scope" value="Bacteria"/>
</dbReference>
<dbReference type="HOGENOM" id="CLU_086499_3_2_6"/>
<dbReference type="GO" id="GO:0022625">
    <property type="term" value="C:cytosolic large ribosomal subunit"/>
    <property type="evidence" value="ECO:0007669"/>
    <property type="project" value="TreeGrafter"/>
</dbReference>
<dbReference type="GO" id="GO:0003729">
    <property type="term" value="F:mRNA binding"/>
    <property type="evidence" value="ECO:0007669"/>
    <property type="project" value="TreeGrafter"/>
</dbReference>
<dbReference type="GO" id="GO:0003735">
    <property type="term" value="F:structural constituent of ribosome"/>
    <property type="evidence" value="ECO:0007669"/>
    <property type="project" value="InterPro"/>
</dbReference>
<dbReference type="GO" id="GO:0006412">
    <property type="term" value="P:translation"/>
    <property type="evidence" value="ECO:0007669"/>
    <property type="project" value="UniProtKB-UniRule"/>
</dbReference>
<dbReference type="CDD" id="cd00387">
    <property type="entry name" value="Ribosomal_L7_L12"/>
    <property type="match status" value="1"/>
</dbReference>
<dbReference type="FunFam" id="3.30.1390.10:FF:000001">
    <property type="entry name" value="50S ribosomal protein L7/L12"/>
    <property type="match status" value="1"/>
</dbReference>
<dbReference type="Gene3D" id="3.30.1390.10">
    <property type="match status" value="1"/>
</dbReference>
<dbReference type="Gene3D" id="1.20.5.710">
    <property type="entry name" value="Single helix bin"/>
    <property type="match status" value="1"/>
</dbReference>
<dbReference type="HAMAP" id="MF_00368">
    <property type="entry name" value="Ribosomal_bL12"/>
    <property type="match status" value="1"/>
</dbReference>
<dbReference type="InterPro" id="IPR000206">
    <property type="entry name" value="Ribosomal_bL12"/>
</dbReference>
<dbReference type="InterPro" id="IPR013823">
    <property type="entry name" value="Ribosomal_bL12_C"/>
</dbReference>
<dbReference type="InterPro" id="IPR014719">
    <property type="entry name" value="Ribosomal_bL12_C/ClpS-like"/>
</dbReference>
<dbReference type="InterPro" id="IPR008932">
    <property type="entry name" value="Ribosomal_bL12_oligo"/>
</dbReference>
<dbReference type="InterPro" id="IPR036235">
    <property type="entry name" value="Ribosomal_bL12_oligo_N_sf"/>
</dbReference>
<dbReference type="NCBIfam" id="TIGR00855">
    <property type="entry name" value="L12"/>
    <property type="match status" value="1"/>
</dbReference>
<dbReference type="PANTHER" id="PTHR45987">
    <property type="entry name" value="39S RIBOSOMAL PROTEIN L12"/>
    <property type="match status" value="1"/>
</dbReference>
<dbReference type="PANTHER" id="PTHR45987:SF4">
    <property type="entry name" value="LARGE RIBOSOMAL SUBUNIT PROTEIN BL12M"/>
    <property type="match status" value="1"/>
</dbReference>
<dbReference type="Pfam" id="PF00542">
    <property type="entry name" value="Ribosomal_L12"/>
    <property type="match status" value="1"/>
</dbReference>
<dbReference type="Pfam" id="PF16320">
    <property type="entry name" value="Ribosomal_L12_N"/>
    <property type="match status" value="1"/>
</dbReference>
<dbReference type="SUPFAM" id="SSF54736">
    <property type="entry name" value="ClpS-like"/>
    <property type="match status" value="1"/>
</dbReference>
<dbReference type="SUPFAM" id="SSF48300">
    <property type="entry name" value="Ribosomal protein L7/12, oligomerisation (N-terminal) domain"/>
    <property type="match status" value="1"/>
</dbReference>
<keyword id="KW-0687">Ribonucleoprotein</keyword>
<keyword id="KW-0689">Ribosomal protein</keyword>
<evidence type="ECO:0000255" key="1">
    <source>
        <dbReference type="HAMAP-Rule" id="MF_00368"/>
    </source>
</evidence>
<evidence type="ECO:0000305" key="2"/>
<name>RL7_HISS1</name>
<sequence>MSLTNEQIIEAIASKTVTEIVELISAMEEKFGVSAAAAAVAVAAGPAEVAEEKTEFDVVLAEAGANKVAVIKAVRGATGLGLKEAKDLVESAPANLKEGISKAEAEALKKELEEAGAKVEIK</sequence>
<feature type="chain" id="PRO_1000007017" description="Large ribosomal subunit protein bL12">
    <location>
        <begin position="1"/>
        <end position="122"/>
    </location>
</feature>
<protein>
    <recommendedName>
        <fullName evidence="1">Large ribosomal subunit protein bL12</fullName>
    </recommendedName>
    <alternativeName>
        <fullName evidence="2">50S ribosomal protein L7/L12</fullName>
    </alternativeName>
</protein>
<gene>
    <name evidence="1" type="primary">rplL</name>
    <name type="ordered locus">HS_0172</name>
</gene>
<proteinExistence type="inferred from homology"/>